<sequence length="515" mass="56225">MVVAYKHEPFTDFSVEANKLAFEEGLKKVESYLGQDYPLIIGGEKITTEDKIVSVNPANKEELVGRVSKASRELAEKAMQVADETFQTWRKSKPEMRADILFRAAAIVRRRKHEFSAILVKEAGKPWNEADADTAEAIDFMEYYGRQMLKLKDGIPVESRPIEYNRFSYIPLGVGVIISPWNFPFAIMAGMTTAALVSGNTVLLKPASTTPVVAAKFMEVLEEAGLPAGVVNFVPGNGSEVGDYLVDHPRTRFISFTGSRDVGIRIYERAAKVNPGQIWLKRVIAEMGGKDTIVVDKEADLELAAKSIVASAFGFSGQKCSACSRAVIHEDVYDHVLNRAVELTKELTVANPAVLGTNMGPVNDQAAFDKVMSYVAIGKEEGRILAGGEGDDSKGWFIQPTIVADVAEDARLMKEEIFGPVVAFCKAKDFDHALAIANNTEYGLTGAVISNNRDHIEKAREDFHVGNLYFNRGCTGAIVGYQPFGGFNMSGTDSKAGGPDYLALHMQAKTTSETL</sequence>
<keyword id="KW-0520">NAD</keyword>
<keyword id="KW-0560">Oxidoreductase</keyword>
<keyword id="KW-1185">Reference proteome</keyword>
<reference key="1">
    <citation type="journal article" date="2003" name="Nature">
        <title>The genome sequence of Bacillus anthracis Ames and comparison to closely related bacteria.</title>
        <authorList>
            <person name="Read T.D."/>
            <person name="Peterson S.N."/>
            <person name="Tourasse N.J."/>
            <person name="Baillie L.W."/>
            <person name="Paulsen I.T."/>
            <person name="Nelson K.E."/>
            <person name="Tettelin H."/>
            <person name="Fouts D.E."/>
            <person name="Eisen J.A."/>
            <person name="Gill S.R."/>
            <person name="Holtzapple E.K."/>
            <person name="Okstad O.A."/>
            <person name="Helgason E."/>
            <person name="Rilstone J."/>
            <person name="Wu M."/>
            <person name="Kolonay J.F."/>
            <person name="Beanan M.J."/>
            <person name="Dodson R.J."/>
            <person name="Brinkac L.M."/>
            <person name="Gwinn M.L."/>
            <person name="DeBoy R.T."/>
            <person name="Madpu R."/>
            <person name="Daugherty S.C."/>
            <person name="Durkin A.S."/>
            <person name="Haft D.H."/>
            <person name="Nelson W.C."/>
            <person name="Peterson J.D."/>
            <person name="Pop M."/>
            <person name="Khouri H.M."/>
            <person name="Radune D."/>
            <person name="Benton J.L."/>
            <person name="Mahamoud Y."/>
            <person name="Jiang L."/>
            <person name="Hance I.R."/>
            <person name="Weidman J.F."/>
            <person name="Berry K.J."/>
            <person name="Plaut R.D."/>
            <person name="Wolf A.M."/>
            <person name="Watkins K.L."/>
            <person name="Nierman W.C."/>
            <person name="Hazen A."/>
            <person name="Cline R.T."/>
            <person name="Redmond C."/>
            <person name="Thwaite J.E."/>
            <person name="White O."/>
            <person name="Salzberg S.L."/>
            <person name="Thomason B."/>
            <person name="Friedlander A.M."/>
            <person name="Koehler T.M."/>
            <person name="Hanna P.C."/>
            <person name="Kolstoe A.-B."/>
            <person name="Fraser C.M."/>
        </authorList>
    </citation>
    <scope>NUCLEOTIDE SEQUENCE [LARGE SCALE GENOMIC DNA]</scope>
    <source>
        <strain>Ames / isolate Porton</strain>
    </source>
</reference>
<reference key="2">
    <citation type="journal article" date="2009" name="J. Bacteriol.">
        <title>The complete genome sequence of Bacillus anthracis Ames 'Ancestor'.</title>
        <authorList>
            <person name="Ravel J."/>
            <person name="Jiang L."/>
            <person name="Stanley S.T."/>
            <person name="Wilson M.R."/>
            <person name="Decker R.S."/>
            <person name="Read T.D."/>
            <person name="Worsham P."/>
            <person name="Keim P.S."/>
            <person name="Salzberg S.L."/>
            <person name="Fraser-Liggett C.M."/>
            <person name="Rasko D.A."/>
        </authorList>
    </citation>
    <scope>NUCLEOTIDE SEQUENCE [LARGE SCALE GENOMIC DNA]</scope>
    <source>
        <strain>Ames ancestor</strain>
    </source>
</reference>
<reference key="3">
    <citation type="submission" date="2004-01" db="EMBL/GenBank/DDBJ databases">
        <title>Complete genome sequence of Bacillus anthracis Sterne.</title>
        <authorList>
            <person name="Brettin T.S."/>
            <person name="Bruce D."/>
            <person name="Challacombe J.F."/>
            <person name="Gilna P."/>
            <person name="Han C."/>
            <person name="Hill K."/>
            <person name="Hitchcock P."/>
            <person name="Jackson P."/>
            <person name="Keim P."/>
            <person name="Longmire J."/>
            <person name="Lucas S."/>
            <person name="Okinaka R."/>
            <person name="Richardson P."/>
            <person name="Rubin E."/>
            <person name="Tice H."/>
        </authorList>
    </citation>
    <scope>NUCLEOTIDE SEQUENCE [LARGE SCALE GENOMIC DNA]</scope>
    <source>
        <strain>Sterne</strain>
    </source>
</reference>
<comment type="catalytic activity">
    <reaction evidence="1">
        <text>L-glutamate 5-semialdehyde + NAD(+) + H2O = L-glutamate + NADH + 2 H(+)</text>
        <dbReference type="Rhea" id="RHEA:30235"/>
        <dbReference type="ChEBI" id="CHEBI:15377"/>
        <dbReference type="ChEBI" id="CHEBI:15378"/>
        <dbReference type="ChEBI" id="CHEBI:29985"/>
        <dbReference type="ChEBI" id="CHEBI:57540"/>
        <dbReference type="ChEBI" id="CHEBI:57945"/>
        <dbReference type="ChEBI" id="CHEBI:58066"/>
        <dbReference type="EC" id="1.2.1.88"/>
    </reaction>
</comment>
<comment type="pathway">
    <text evidence="1">Amino-acid degradation; L-proline degradation into L-glutamate; L-glutamate from L-proline: step 2/2.</text>
</comment>
<comment type="similarity">
    <text evidence="1">Belongs to the aldehyde dehydrogenase family. RocA subfamily.</text>
</comment>
<accession>Q81ZF8</accession>
<accession>Q6I4A5</accession>
<accession>Q6KY08</accession>
<proteinExistence type="inferred from homology"/>
<evidence type="ECO:0000255" key="1">
    <source>
        <dbReference type="HAMAP-Rule" id="MF_00733"/>
    </source>
</evidence>
<evidence type="ECO:0000305" key="2"/>
<feature type="chain" id="PRO_0000056503" description="1-pyrroline-5-carboxylate dehydrogenase">
    <location>
        <begin position="1"/>
        <end position="515"/>
    </location>
</feature>
<feature type="active site" evidence="1">
    <location>
        <position position="286"/>
    </location>
</feature>
<feature type="active site" evidence="1">
    <location>
        <position position="320"/>
    </location>
</feature>
<feature type="sequence conflict" description="In Ref. 3; AAT52626." evidence="2" ref="3">
    <original>S</original>
    <variation>F</variation>
    <location>
        <position position="168"/>
    </location>
</feature>
<name>ROCA_BACAN</name>
<organism>
    <name type="scientific">Bacillus anthracis</name>
    <dbReference type="NCBI Taxonomy" id="1392"/>
    <lineage>
        <taxon>Bacteria</taxon>
        <taxon>Bacillati</taxon>
        <taxon>Bacillota</taxon>
        <taxon>Bacilli</taxon>
        <taxon>Bacillales</taxon>
        <taxon>Bacillaceae</taxon>
        <taxon>Bacillus</taxon>
        <taxon>Bacillus cereus group</taxon>
    </lineage>
</organism>
<protein>
    <recommendedName>
        <fullName evidence="1">1-pyrroline-5-carboxylate dehydrogenase</fullName>
        <shortName evidence="1">P5C dehydrogenase</shortName>
        <ecNumber evidence="1">1.2.1.88</ecNumber>
    </recommendedName>
    <alternativeName>
        <fullName evidence="1">L-glutamate gamma-semialdehyde dehydrogenase</fullName>
    </alternativeName>
</protein>
<dbReference type="EC" id="1.2.1.88" evidence="1"/>
<dbReference type="EMBL" id="AE016879">
    <property type="protein sequence ID" value="AAP24344.1"/>
    <property type="molecule type" value="Genomic_DNA"/>
</dbReference>
<dbReference type="EMBL" id="AE017334">
    <property type="protein sequence ID" value="AAT29396.1"/>
    <property type="molecule type" value="Genomic_DNA"/>
</dbReference>
<dbReference type="EMBL" id="AE017225">
    <property type="protein sequence ID" value="AAT52626.1"/>
    <property type="molecule type" value="Genomic_DNA"/>
</dbReference>
<dbReference type="RefSeq" id="NP_842858.1">
    <property type="nucleotide sequence ID" value="NC_003997.3"/>
</dbReference>
<dbReference type="SMR" id="Q81ZF8"/>
<dbReference type="IntAct" id="Q81ZF8">
    <property type="interactions" value="1"/>
</dbReference>
<dbReference type="STRING" id="261594.GBAA_0309"/>
<dbReference type="DNASU" id="1087266"/>
<dbReference type="KEGG" id="ban:BA_0309"/>
<dbReference type="KEGG" id="banh:HYU01_01680"/>
<dbReference type="KEGG" id="bar:GBAA_0309"/>
<dbReference type="KEGG" id="bat:BAS0295"/>
<dbReference type="PATRIC" id="fig|198094.11.peg.299"/>
<dbReference type="eggNOG" id="COG1012">
    <property type="taxonomic scope" value="Bacteria"/>
</dbReference>
<dbReference type="HOGENOM" id="CLU_005391_0_0_9"/>
<dbReference type="OMA" id="VGAAKEW"/>
<dbReference type="OrthoDB" id="9762913at2"/>
<dbReference type="UniPathway" id="UPA00261">
    <property type="reaction ID" value="UER00374"/>
</dbReference>
<dbReference type="Proteomes" id="UP000000427">
    <property type="component" value="Chromosome"/>
</dbReference>
<dbReference type="Proteomes" id="UP000000594">
    <property type="component" value="Chromosome"/>
</dbReference>
<dbReference type="GO" id="GO:0009898">
    <property type="term" value="C:cytoplasmic side of plasma membrane"/>
    <property type="evidence" value="ECO:0007669"/>
    <property type="project" value="TreeGrafter"/>
</dbReference>
<dbReference type="GO" id="GO:0003842">
    <property type="term" value="F:1-pyrroline-5-carboxylate dehydrogenase activity"/>
    <property type="evidence" value="ECO:0007669"/>
    <property type="project" value="UniProtKB-UniRule"/>
</dbReference>
<dbReference type="GO" id="GO:0006537">
    <property type="term" value="P:glutamate biosynthetic process"/>
    <property type="evidence" value="ECO:0007669"/>
    <property type="project" value="UniProtKB-UniRule"/>
</dbReference>
<dbReference type="GO" id="GO:0010133">
    <property type="term" value="P:proline catabolic process to glutamate"/>
    <property type="evidence" value="ECO:0007669"/>
    <property type="project" value="UniProtKB-UniPathway"/>
</dbReference>
<dbReference type="CDD" id="cd07124">
    <property type="entry name" value="ALDH_PutA-P5CDH-RocA"/>
    <property type="match status" value="1"/>
</dbReference>
<dbReference type="FunFam" id="3.40.309.10:FF:000005">
    <property type="entry name" value="1-pyrroline-5-carboxylate dehydrogenase 1"/>
    <property type="match status" value="1"/>
</dbReference>
<dbReference type="FunFam" id="3.40.605.10:FF:000045">
    <property type="entry name" value="1-pyrroline-5-carboxylate dehydrogenase 1"/>
    <property type="match status" value="1"/>
</dbReference>
<dbReference type="Gene3D" id="3.40.605.10">
    <property type="entry name" value="Aldehyde Dehydrogenase, Chain A, domain 1"/>
    <property type="match status" value="1"/>
</dbReference>
<dbReference type="Gene3D" id="3.40.309.10">
    <property type="entry name" value="Aldehyde Dehydrogenase, Chain A, domain 2"/>
    <property type="match status" value="1"/>
</dbReference>
<dbReference type="HAMAP" id="MF_00733">
    <property type="entry name" value="RocA"/>
    <property type="match status" value="1"/>
</dbReference>
<dbReference type="InterPro" id="IPR016161">
    <property type="entry name" value="Ald_DH/histidinol_DH"/>
</dbReference>
<dbReference type="InterPro" id="IPR016163">
    <property type="entry name" value="Ald_DH_C"/>
</dbReference>
<dbReference type="InterPro" id="IPR016160">
    <property type="entry name" value="Ald_DH_CS_CYS"/>
</dbReference>
<dbReference type="InterPro" id="IPR029510">
    <property type="entry name" value="Ald_DH_CS_GLU"/>
</dbReference>
<dbReference type="InterPro" id="IPR016162">
    <property type="entry name" value="Ald_DH_N"/>
</dbReference>
<dbReference type="InterPro" id="IPR015590">
    <property type="entry name" value="Aldehyde_DH_dom"/>
</dbReference>
<dbReference type="InterPro" id="IPR050485">
    <property type="entry name" value="Proline_metab_enzyme"/>
</dbReference>
<dbReference type="InterPro" id="IPR005932">
    <property type="entry name" value="RocA"/>
</dbReference>
<dbReference type="InterPro" id="IPR047597">
    <property type="entry name" value="RocA_bacillales"/>
</dbReference>
<dbReference type="NCBIfam" id="TIGR01237">
    <property type="entry name" value="D1pyr5carbox2"/>
    <property type="match status" value="1"/>
</dbReference>
<dbReference type="NCBIfam" id="NF002852">
    <property type="entry name" value="PRK03137.1"/>
    <property type="match status" value="1"/>
</dbReference>
<dbReference type="PANTHER" id="PTHR42862">
    <property type="entry name" value="DELTA-1-PYRROLINE-5-CARBOXYLATE DEHYDROGENASE 1, ISOFORM A-RELATED"/>
    <property type="match status" value="1"/>
</dbReference>
<dbReference type="PANTHER" id="PTHR42862:SF1">
    <property type="entry name" value="DELTA-1-PYRROLINE-5-CARBOXYLATE DEHYDROGENASE 2, ISOFORM A-RELATED"/>
    <property type="match status" value="1"/>
</dbReference>
<dbReference type="Pfam" id="PF00171">
    <property type="entry name" value="Aldedh"/>
    <property type="match status" value="1"/>
</dbReference>
<dbReference type="SUPFAM" id="SSF53720">
    <property type="entry name" value="ALDH-like"/>
    <property type="match status" value="1"/>
</dbReference>
<dbReference type="PROSITE" id="PS00070">
    <property type="entry name" value="ALDEHYDE_DEHYDR_CYS"/>
    <property type="match status" value="1"/>
</dbReference>
<dbReference type="PROSITE" id="PS00687">
    <property type="entry name" value="ALDEHYDE_DEHYDR_GLU"/>
    <property type="match status" value="1"/>
</dbReference>
<gene>
    <name evidence="1" type="primary">rocA</name>
    <name type="ordered locus">BA_0309</name>
    <name type="ordered locus">GBAA_0309</name>
    <name type="ordered locus">BAS0295</name>
</gene>